<dbReference type="EMBL" id="AY057878">
    <property type="protein sequence ID" value="AAL30060.1"/>
    <property type="molecule type" value="mRNA"/>
</dbReference>
<dbReference type="BMRB" id="Q8AY50"/>
<dbReference type="SMR" id="Q8AY50"/>
<dbReference type="GO" id="GO:0005576">
    <property type="term" value="C:extracellular region"/>
    <property type="evidence" value="ECO:0007669"/>
    <property type="project" value="UniProtKB-SubCell"/>
</dbReference>
<dbReference type="GO" id="GO:0030550">
    <property type="term" value="F:acetylcholine receptor inhibitor activity"/>
    <property type="evidence" value="ECO:0007669"/>
    <property type="project" value="UniProtKB-KW"/>
</dbReference>
<dbReference type="GO" id="GO:0099106">
    <property type="term" value="F:ion channel regulator activity"/>
    <property type="evidence" value="ECO:0007669"/>
    <property type="project" value="UniProtKB-KW"/>
</dbReference>
<dbReference type="GO" id="GO:0090729">
    <property type="term" value="F:toxin activity"/>
    <property type="evidence" value="ECO:0007669"/>
    <property type="project" value="UniProtKB-KW"/>
</dbReference>
<dbReference type="CDD" id="cd00206">
    <property type="entry name" value="TFP_snake_toxin"/>
    <property type="match status" value="1"/>
</dbReference>
<dbReference type="Gene3D" id="2.10.60.10">
    <property type="entry name" value="CD59"/>
    <property type="match status" value="1"/>
</dbReference>
<dbReference type="InterPro" id="IPR003571">
    <property type="entry name" value="Snake_3FTx"/>
</dbReference>
<dbReference type="InterPro" id="IPR045860">
    <property type="entry name" value="Snake_toxin-like_sf"/>
</dbReference>
<dbReference type="InterPro" id="IPR018354">
    <property type="entry name" value="Snake_toxin_con_site"/>
</dbReference>
<dbReference type="InterPro" id="IPR054131">
    <property type="entry name" value="Toxin_cobra-type"/>
</dbReference>
<dbReference type="Pfam" id="PF21947">
    <property type="entry name" value="Toxin_cobra-type"/>
    <property type="match status" value="1"/>
</dbReference>
<dbReference type="SUPFAM" id="SSF57302">
    <property type="entry name" value="Snake toxin-like"/>
    <property type="match status" value="1"/>
</dbReference>
<dbReference type="PROSITE" id="PS00272">
    <property type="entry name" value="SNAKE_TOXIN"/>
    <property type="match status" value="1"/>
</dbReference>
<proteinExistence type="inferred from homology"/>
<evidence type="ECO:0000250" key="1"/>
<evidence type="ECO:0000250" key="2">
    <source>
        <dbReference type="UniProtKB" id="O42255"/>
    </source>
</evidence>
<evidence type="ECO:0000250" key="3">
    <source>
        <dbReference type="UniProtKB" id="Q8AY51"/>
    </source>
</evidence>
<evidence type="ECO:0000255" key="4"/>
<evidence type="ECO:0000305" key="5"/>
<keyword id="KW-0008">Acetylcholine receptor inhibiting toxin</keyword>
<keyword id="KW-1015">Disulfide bond</keyword>
<keyword id="KW-0872">Ion channel impairing toxin</keyword>
<keyword id="KW-0528">Neurotoxin</keyword>
<keyword id="KW-0629">Postsynaptic neurotoxin</keyword>
<keyword id="KW-0964">Secreted</keyword>
<keyword id="KW-0732">Signal</keyword>
<keyword id="KW-0800">Toxin</keyword>
<reference key="1">
    <citation type="submission" date="2001-10" db="EMBL/GenBank/DDBJ databases">
        <title>Structural and functional genomics of Bungarus candidus.</title>
        <authorList>
            <person name="Tsai I.H."/>
            <person name="Wang Y.M."/>
            <person name="Hsu H.Y."/>
        </authorList>
    </citation>
    <scope>NUCLEOTIDE SEQUENCE [MRNA]</scope>
    <source>
        <tissue>Venom gland</tissue>
    </source>
</reference>
<comment type="function">
    <text evidence="2">Binds with low affinity to muscular (alpha-1-beta-1-delta-epsilon/CHRNA1-CHRNB1-CHRND-CHRNE) and very low affinity to neuronal (alpha-7/CHRNA7) nicotinic acetylcholine receptor (nAChR).</text>
</comment>
<comment type="subcellular location">
    <subcellularLocation>
        <location evidence="1">Secreted</location>
    </subcellularLocation>
</comment>
<comment type="tissue specificity">
    <text evidence="5">Expressed by the venom gland.</text>
</comment>
<comment type="similarity">
    <text evidence="5">Belongs to the three-finger toxin family. Ancestral subfamily. Orphan group II sub-subfamily.</text>
</comment>
<sequence>MKTLLLTLVVVAIVCLDLGYTLTCLICPEKDCQKVHTCRNEEKICVKRSYDKNQLGWRAQRGCAVSCPKAKPNETVQCCSTDKCNK</sequence>
<organism>
    <name type="scientific">Bungarus candidus</name>
    <name type="common">Malayan krait</name>
    <dbReference type="NCBI Taxonomy" id="92438"/>
    <lineage>
        <taxon>Eukaryota</taxon>
        <taxon>Metazoa</taxon>
        <taxon>Chordata</taxon>
        <taxon>Craniata</taxon>
        <taxon>Vertebrata</taxon>
        <taxon>Euteleostomi</taxon>
        <taxon>Lepidosauria</taxon>
        <taxon>Squamata</taxon>
        <taxon>Bifurcata</taxon>
        <taxon>Unidentata</taxon>
        <taxon>Episquamata</taxon>
        <taxon>Toxicofera</taxon>
        <taxon>Serpentes</taxon>
        <taxon>Colubroidea</taxon>
        <taxon>Elapidae</taxon>
        <taxon>Bungarinae</taxon>
        <taxon>Bungarus</taxon>
    </lineage>
</organism>
<name>3NO22_BUNCA</name>
<feature type="signal peptide" evidence="4">
    <location>
        <begin position="1"/>
        <end position="23"/>
    </location>
</feature>
<feature type="chain" id="PRO_0000316185" description="Weak toxin 2">
    <location>
        <begin position="24"/>
        <end position="86"/>
    </location>
</feature>
<feature type="disulfide bond" evidence="3">
    <location>
        <begin position="24"/>
        <end position="45"/>
    </location>
</feature>
<feature type="disulfide bond" evidence="3">
    <location>
        <begin position="27"/>
        <end position="32"/>
    </location>
</feature>
<feature type="disulfide bond" evidence="3">
    <location>
        <begin position="38"/>
        <end position="63"/>
    </location>
</feature>
<feature type="disulfide bond" evidence="3">
    <location>
        <begin position="67"/>
        <end position="78"/>
    </location>
</feature>
<feature type="disulfide bond" evidence="3">
    <location>
        <begin position="79"/>
        <end position="84"/>
    </location>
</feature>
<protein>
    <recommendedName>
        <fullName>Weak toxin 2</fullName>
    </recommendedName>
</protein>
<accession>Q8AY50</accession>